<accession>Q58224</accession>
<sequence length="330" mass="37581">MLKESEDIEGIAIEGPWLEDDISLEEIIKKYYLKIGFQASHIGKAIKIWKHIEEKRKKGDEITVFFGYTSNIVSSGLREIIAYLVKHKKIDIIVTTAGGVEEDFIKCLKPFILGDWEVDGKMLREKGINRIGNIFVPNDRYIAFEEYMMEFFEEILNLQRETGKIITASEFCYKLGEFMDKKLKSKEKEKSILYWAYKNNIPIFCPAITDGSIGDMLYFFKKYNKDEELKIDVANDIVKLNDIAINSKETACIVLGGSLPKHSIINANLFREGTDYAIYVTTALPWDGSLSGAPPEEGVSWGKIGAKADYVEIWGDATIIFPLLVYCVMK</sequence>
<name>DHYS_METJA</name>
<keyword id="KW-0386">Hypusine biosynthesis</keyword>
<keyword id="KW-0520">NAD</keyword>
<keyword id="KW-1185">Reference proteome</keyword>
<keyword id="KW-0808">Transferase</keyword>
<gene>
    <name type="primary">dys</name>
    <name type="ordered locus">MJ0814</name>
</gene>
<feature type="chain" id="PRO_0000134495" description="Probable deoxyhypusine synthase">
    <location>
        <begin position="1"/>
        <end position="330"/>
    </location>
</feature>
<feature type="active site" description="Nucleophile" evidence="1">
    <location>
        <position position="303"/>
    </location>
</feature>
<evidence type="ECO:0000250" key="1"/>
<evidence type="ECO:0000305" key="2"/>
<comment type="function">
    <text evidence="1">Catalyzes the NAD-dependent oxidative cleavage of spermidine and the subsequent transfer of the butylamine moiety of spermidine to the epsilon-amino group of a specific lysine residue of the eIF-5A precursor protein to form the intermediate deoxyhypusine residue.</text>
</comment>
<comment type="catalytic activity">
    <reaction>
        <text>[eIF5A protein]-L-lysine + spermidine = [eIF5A protein]-deoxyhypusine + propane-1,3-diamine</text>
        <dbReference type="Rhea" id="RHEA:33299"/>
        <dbReference type="Rhea" id="RHEA-COMP:10143"/>
        <dbReference type="Rhea" id="RHEA-COMP:10144"/>
        <dbReference type="ChEBI" id="CHEBI:29969"/>
        <dbReference type="ChEBI" id="CHEBI:57484"/>
        <dbReference type="ChEBI" id="CHEBI:57834"/>
        <dbReference type="ChEBI" id="CHEBI:82657"/>
        <dbReference type="EC" id="2.5.1.46"/>
    </reaction>
</comment>
<comment type="cofactor">
    <cofactor evidence="1">
        <name>NAD(+)</name>
        <dbReference type="ChEBI" id="CHEBI:57540"/>
    </cofactor>
</comment>
<comment type="pathway">
    <text>Protein modification; eIF5A hypusination.</text>
</comment>
<comment type="similarity">
    <text evidence="2">Belongs to the deoxyhypusine synthase family.</text>
</comment>
<comment type="sequence caution" evidence="2">
    <conflict type="erroneous initiation">
        <sequence resource="EMBL-CDS" id="AAB98813"/>
    </conflict>
</comment>
<reference key="1">
    <citation type="journal article" date="1996" name="Science">
        <title>Complete genome sequence of the methanogenic archaeon, Methanococcus jannaschii.</title>
        <authorList>
            <person name="Bult C.J."/>
            <person name="White O."/>
            <person name="Olsen G.J."/>
            <person name="Zhou L."/>
            <person name="Fleischmann R.D."/>
            <person name="Sutton G.G."/>
            <person name="Blake J.A."/>
            <person name="FitzGerald L.M."/>
            <person name="Clayton R.A."/>
            <person name="Gocayne J.D."/>
            <person name="Kerlavage A.R."/>
            <person name="Dougherty B.A."/>
            <person name="Tomb J.-F."/>
            <person name="Adams M.D."/>
            <person name="Reich C.I."/>
            <person name="Overbeek R."/>
            <person name="Kirkness E.F."/>
            <person name="Weinstock K.G."/>
            <person name="Merrick J.M."/>
            <person name="Glodek A."/>
            <person name="Scott J.L."/>
            <person name="Geoghagen N.S.M."/>
            <person name="Weidman J.F."/>
            <person name="Fuhrmann J.L."/>
            <person name="Nguyen D."/>
            <person name="Utterback T.R."/>
            <person name="Kelley J.M."/>
            <person name="Peterson J.D."/>
            <person name="Sadow P.W."/>
            <person name="Hanna M.C."/>
            <person name="Cotton M.D."/>
            <person name="Roberts K.M."/>
            <person name="Hurst M.A."/>
            <person name="Kaine B.P."/>
            <person name="Borodovsky M."/>
            <person name="Klenk H.-P."/>
            <person name="Fraser C.M."/>
            <person name="Smith H.O."/>
            <person name="Woese C.R."/>
            <person name="Venter J.C."/>
        </authorList>
    </citation>
    <scope>NUCLEOTIDE SEQUENCE [LARGE SCALE GENOMIC DNA]</scope>
    <source>
        <strain>ATCC 43067 / DSM 2661 / JAL-1 / JCM 10045 / NBRC 100440</strain>
    </source>
</reference>
<dbReference type="EC" id="2.5.1.46"/>
<dbReference type="EMBL" id="L77117">
    <property type="protein sequence ID" value="AAB98813.1"/>
    <property type="status" value="ALT_INIT"/>
    <property type="molecule type" value="Genomic_DNA"/>
</dbReference>
<dbReference type="PIR" id="F64401">
    <property type="entry name" value="F64401"/>
</dbReference>
<dbReference type="SMR" id="Q58224"/>
<dbReference type="FunCoup" id="Q58224">
    <property type="interactions" value="195"/>
</dbReference>
<dbReference type="STRING" id="243232.MJ_0814"/>
<dbReference type="PaxDb" id="243232-MJ_0814"/>
<dbReference type="EnsemblBacteria" id="AAB98813">
    <property type="protein sequence ID" value="AAB98813"/>
    <property type="gene ID" value="MJ_0814"/>
</dbReference>
<dbReference type="KEGG" id="mja:MJ_0814"/>
<dbReference type="eggNOG" id="arCOG04142">
    <property type="taxonomic scope" value="Archaea"/>
</dbReference>
<dbReference type="HOGENOM" id="CLU_039781_0_0_2"/>
<dbReference type="InParanoid" id="Q58224"/>
<dbReference type="PhylomeDB" id="Q58224"/>
<dbReference type="UniPathway" id="UPA00354"/>
<dbReference type="Proteomes" id="UP000000805">
    <property type="component" value="Chromosome"/>
</dbReference>
<dbReference type="GO" id="GO:0005737">
    <property type="term" value="C:cytoplasm"/>
    <property type="evidence" value="ECO:0000318"/>
    <property type="project" value="GO_Central"/>
</dbReference>
<dbReference type="GO" id="GO:0034038">
    <property type="term" value="F:deoxyhypusine synthase activity"/>
    <property type="evidence" value="ECO:0000318"/>
    <property type="project" value="GO_Central"/>
</dbReference>
<dbReference type="GO" id="GO:0008216">
    <property type="term" value="P:spermidine metabolic process"/>
    <property type="evidence" value="ECO:0000318"/>
    <property type="project" value="GO_Central"/>
</dbReference>
<dbReference type="FunFam" id="3.40.910.10:FF:000004">
    <property type="entry name" value="Probable deoxyhypusine synthase"/>
    <property type="match status" value="1"/>
</dbReference>
<dbReference type="Gene3D" id="3.40.910.10">
    <property type="entry name" value="Deoxyhypusine synthase"/>
    <property type="match status" value="1"/>
</dbReference>
<dbReference type="HAMAP" id="MF_00153">
    <property type="entry name" value="DHS"/>
    <property type="match status" value="1"/>
</dbReference>
<dbReference type="InterPro" id="IPR022899">
    <property type="entry name" value="Deoxyhypus_synthase_arc"/>
</dbReference>
<dbReference type="InterPro" id="IPR002773">
    <property type="entry name" value="Deoxyhypusine_synthase"/>
</dbReference>
<dbReference type="InterPro" id="IPR036982">
    <property type="entry name" value="Deoxyhypusine_synthase_sf"/>
</dbReference>
<dbReference type="InterPro" id="IPR029035">
    <property type="entry name" value="DHS-like_NAD/FAD-binding_dom"/>
</dbReference>
<dbReference type="NCBIfam" id="TIGR00321">
    <property type="entry name" value="dhys"/>
    <property type="match status" value="1"/>
</dbReference>
<dbReference type="NCBIfam" id="NF003052">
    <property type="entry name" value="PRK03971.1"/>
    <property type="match status" value="1"/>
</dbReference>
<dbReference type="PANTHER" id="PTHR11703">
    <property type="entry name" value="DEOXYHYPUSINE SYNTHASE"/>
    <property type="match status" value="1"/>
</dbReference>
<dbReference type="PANTHER" id="PTHR11703:SF0">
    <property type="entry name" value="DEOXYHYPUSINE SYNTHASE"/>
    <property type="match status" value="1"/>
</dbReference>
<dbReference type="Pfam" id="PF01916">
    <property type="entry name" value="DS"/>
    <property type="match status" value="1"/>
</dbReference>
<dbReference type="SUPFAM" id="SSF52467">
    <property type="entry name" value="DHS-like NAD/FAD-binding domain"/>
    <property type="match status" value="1"/>
</dbReference>
<proteinExistence type="inferred from homology"/>
<organism>
    <name type="scientific">Methanocaldococcus jannaschii (strain ATCC 43067 / DSM 2661 / JAL-1 / JCM 10045 / NBRC 100440)</name>
    <name type="common">Methanococcus jannaschii</name>
    <dbReference type="NCBI Taxonomy" id="243232"/>
    <lineage>
        <taxon>Archaea</taxon>
        <taxon>Methanobacteriati</taxon>
        <taxon>Methanobacteriota</taxon>
        <taxon>Methanomada group</taxon>
        <taxon>Methanococci</taxon>
        <taxon>Methanococcales</taxon>
        <taxon>Methanocaldococcaceae</taxon>
        <taxon>Methanocaldococcus</taxon>
    </lineage>
</organism>
<protein>
    <recommendedName>
        <fullName>Probable deoxyhypusine synthase</fullName>
        <shortName>DHS</shortName>
        <ecNumber>2.5.1.46</ecNumber>
    </recommendedName>
</protein>